<sequence length="285" mass="31361">MTGVFDSLAADMHSNHMPSSSYHSLHKSQESPTLPVSTATDSSYYTNQQQQQHCGAVSPYGQLGSYQFHGAAINGISYSTKSYDLSYTGSYSSYGPYGTSPSPPHNDQEKEDCEPEVRMVNGKPKKVRKPRTIYSSFQLAALQRRFQKTQYLALPERAELAASLGVTQTQVKIWFQNRRSKFKKMWKSGEIPSDQLPVGSESSPCSSPSASTATWDFGPHQRLQGATNGSALQSSNSASSPSPFLSNYSWYQTSNSAPHLQSNPLLQQHHLHHHPPAPISAGTIF</sequence>
<reference key="1">
    <citation type="journal article" date="1993" name="Development">
        <title>Xenopus Distal-less related homeobox genes are expressed in the developing forebrain and are induced by planar signals.</title>
        <authorList>
            <person name="Papalopulu N."/>
            <person name="Kintner C.R."/>
        </authorList>
    </citation>
    <scope>NUCLEOTIDE SEQUENCE [MRNA]</scope>
    <source>
        <tissue>Neurula</tissue>
    </source>
</reference>
<proteinExistence type="evidence at transcript level"/>
<comment type="function">
    <text evidence="1 2">Involved in the Notch signaling pathway as Notch ligand. Activates NOTCH1 and NOTCH4. Involved in angiogenesis; negatively regulates endothelial cell proliferation and migration and angiogenic sprouting. Essential for retinal progenitor proliferation is required for suppressing rod fates in late retinal progenitors as well as for proper generation of other retinal cell types. During spinal cord neurogenesis, inhibits V2a interneuron fate (By similarity).</text>
</comment>
<comment type="subcellular location">
    <subcellularLocation>
        <location evidence="3">Nucleus</location>
    </subcellularLocation>
</comment>
<comment type="tissue specificity">
    <text>Expression restricted to anterior ectodermal derivatives, namely the ventral forebrain, the cranial neural crest and the cement gland. Also expressed in the developing eye.</text>
</comment>
<comment type="similarity">
    <text evidence="5">Belongs to the distal-less homeobox family.</text>
</comment>
<accession>P53775</accession>
<organism>
    <name type="scientific">Xenopus laevis</name>
    <name type="common">African clawed frog</name>
    <dbReference type="NCBI Taxonomy" id="8355"/>
    <lineage>
        <taxon>Eukaryota</taxon>
        <taxon>Metazoa</taxon>
        <taxon>Chordata</taxon>
        <taxon>Craniata</taxon>
        <taxon>Vertebrata</taxon>
        <taxon>Euteleostomi</taxon>
        <taxon>Amphibia</taxon>
        <taxon>Batrachia</taxon>
        <taxon>Anura</taxon>
        <taxon>Pipoidea</taxon>
        <taxon>Pipidae</taxon>
        <taxon>Xenopodinae</taxon>
        <taxon>Xenopus</taxon>
        <taxon>Xenopus</taxon>
    </lineage>
</organism>
<keyword id="KW-0037">Angiogenesis</keyword>
<keyword id="KW-0217">Developmental protein</keyword>
<keyword id="KW-0221">Differentiation</keyword>
<keyword id="KW-0238">DNA-binding</keyword>
<keyword id="KW-0371">Homeobox</keyword>
<keyword id="KW-0524">Neurogenesis</keyword>
<keyword id="KW-0539">Nucleus</keyword>
<keyword id="KW-1185">Reference proteome</keyword>
<keyword id="KW-0716">Sensory transduction</keyword>
<keyword id="KW-0844">Vision</keyword>
<dbReference type="EMBL" id="L09728">
    <property type="protein sequence ID" value="AAA02621.1"/>
    <property type="molecule type" value="mRNA"/>
</dbReference>
<dbReference type="PIR" id="I51412">
    <property type="entry name" value="I51412"/>
</dbReference>
<dbReference type="RefSeq" id="NP_001084032.1">
    <property type="nucleotide sequence ID" value="NM_001090563.2"/>
</dbReference>
<dbReference type="SMR" id="P53775"/>
<dbReference type="GeneID" id="399264"/>
<dbReference type="KEGG" id="xla:399264"/>
<dbReference type="AGR" id="Xenbase:XB-GENE-852896"/>
<dbReference type="CTD" id="399264"/>
<dbReference type="Xenbase" id="XB-GENE-852896">
    <property type="gene designation" value="dlx2.L"/>
</dbReference>
<dbReference type="OMA" id="YSWYHQA"/>
<dbReference type="OrthoDB" id="6159439at2759"/>
<dbReference type="Proteomes" id="UP000186698">
    <property type="component" value="Chromosome 9_10L"/>
</dbReference>
<dbReference type="Bgee" id="399264">
    <property type="expression patterns" value="Expressed in brain and 8 other cell types or tissues"/>
</dbReference>
<dbReference type="GO" id="GO:0005634">
    <property type="term" value="C:nucleus"/>
    <property type="evidence" value="ECO:0007669"/>
    <property type="project" value="UniProtKB-SubCell"/>
</dbReference>
<dbReference type="GO" id="GO:0000981">
    <property type="term" value="F:DNA-binding transcription factor activity, RNA polymerase II-specific"/>
    <property type="evidence" value="ECO:0000318"/>
    <property type="project" value="GO_Central"/>
</dbReference>
<dbReference type="GO" id="GO:0000978">
    <property type="term" value="F:RNA polymerase II cis-regulatory region sequence-specific DNA binding"/>
    <property type="evidence" value="ECO:0000318"/>
    <property type="project" value="GO_Central"/>
</dbReference>
<dbReference type="GO" id="GO:0001525">
    <property type="term" value="P:angiogenesis"/>
    <property type="evidence" value="ECO:0007669"/>
    <property type="project" value="UniProtKB-KW"/>
</dbReference>
<dbReference type="GO" id="GO:0030154">
    <property type="term" value="P:cell differentiation"/>
    <property type="evidence" value="ECO:0000318"/>
    <property type="project" value="GO_Central"/>
</dbReference>
<dbReference type="GO" id="GO:0048706">
    <property type="term" value="P:embryonic skeletal system development"/>
    <property type="evidence" value="ECO:0000318"/>
    <property type="project" value="GO_Central"/>
</dbReference>
<dbReference type="GO" id="GO:0000122">
    <property type="term" value="P:negative regulation of transcription by RNA polymerase II"/>
    <property type="evidence" value="ECO:0007669"/>
    <property type="project" value="TreeGrafter"/>
</dbReference>
<dbReference type="GO" id="GO:0006357">
    <property type="term" value="P:regulation of transcription by RNA polymerase II"/>
    <property type="evidence" value="ECO:0000318"/>
    <property type="project" value="GO_Central"/>
</dbReference>
<dbReference type="GO" id="GO:0060579">
    <property type="term" value="P:ventral spinal cord interneuron fate commitment"/>
    <property type="evidence" value="ECO:0000250"/>
    <property type="project" value="UniProtKB"/>
</dbReference>
<dbReference type="GO" id="GO:0007601">
    <property type="term" value="P:visual perception"/>
    <property type="evidence" value="ECO:0007669"/>
    <property type="project" value="UniProtKB-KW"/>
</dbReference>
<dbReference type="CDD" id="cd00086">
    <property type="entry name" value="homeodomain"/>
    <property type="match status" value="1"/>
</dbReference>
<dbReference type="FunFam" id="1.10.10.60:FF:000048">
    <property type="entry name" value="Distal-less homeobox 2"/>
    <property type="match status" value="1"/>
</dbReference>
<dbReference type="Gene3D" id="1.10.10.60">
    <property type="entry name" value="Homeodomain-like"/>
    <property type="match status" value="1"/>
</dbReference>
<dbReference type="InterPro" id="IPR050460">
    <property type="entry name" value="Distal-less_Homeobox_TF"/>
</dbReference>
<dbReference type="InterPro" id="IPR022135">
    <property type="entry name" value="Distal-less_N"/>
</dbReference>
<dbReference type="InterPro" id="IPR001356">
    <property type="entry name" value="HD"/>
</dbReference>
<dbReference type="InterPro" id="IPR020479">
    <property type="entry name" value="HD_metazoa"/>
</dbReference>
<dbReference type="InterPro" id="IPR017970">
    <property type="entry name" value="Homeobox_CS"/>
</dbReference>
<dbReference type="InterPro" id="IPR009057">
    <property type="entry name" value="Homeodomain-like_sf"/>
</dbReference>
<dbReference type="InterPro" id="IPR000047">
    <property type="entry name" value="HTH_motif"/>
</dbReference>
<dbReference type="PANTHER" id="PTHR24327">
    <property type="entry name" value="HOMEOBOX PROTEIN"/>
    <property type="match status" value="1"/>
</dbReference>
<dbReference type="PANTHER" id="PTHR24327:SF23">
    <property type="entry name" value="HOMEOBOX PROTEIN DLX-2"/>
    <property type="match status" value="1"/>
</dbReference>
<dbReference type="Pfam" id="PF12413">
    <property type="entry name" value="DLL_N"/>
    <property type="match status" value="1"/>
</dbReference>
<dbReference type="Pfam" id="PF00046">
    <property type="entry name" value="Homeodomain"/>
    <property type="match status" value="1"/>
</dbReference>
<dbReference type="PRINTS" id="PR00024">
    <property type="entry name" value="HOMEOBOX"/>
</dbReference>
<dbReference type="PRINTS" id="PR00031">
    <property type="entry name" value="HTHREPRESSR"/>
</dbReference>
<dbReference type="SMART" id="SM00389">
    <property type="entry name" value="HOX"/>
    <property type="match status" value="1"/>
</dbReference>
<dbReference type="SUPFAM" id="SSF46689">
    <property type="entry name" value="Homeodomain-like"/>
    <property type="match status" value="1"/>
</dbReference>
<dbReference type="PROSITE" id="PS00027">
    <property type="entry name" value="HOMEOBOX_1"/>
    <property type="match status" value="1"/>
</dbReference>
<dbReference type="PROSITE" id="PS50071">
    <property type="entry name" value="HOMEOBOX_2"/>
    <property type="match status" value="1"/>
</dbReference>
<feature type="chain" id="PRO_0000049039" description="Homeobox protein DLL-4">
    <location>
        <begin position="1"/>
        <end position="285"/>
    </location>
</feature>
<feature type="DNA-binding region" description="Homeobox" evidence="3">
    <location>
        <begin position="127"/>
        <end position="186"/>
    </location>
</feature>
<feature type="region of interest" description="Disordered" evidence="4">
    <location>
        <begin position="17"/>
        <end position="47"/>
    </location>
</feature>
<feature type="region of interest" description="Disordered" evidence="4">
    <location>
        <begin position="96"/>
        <end position="115"/>
    </location>
</feature>
<feature type="region of interest" description="Disordered" evidence="4">
    <location>
        <begin position="188"/>
        <end position="238"/>
    </location>
</feature>
<feature type="compositionally biased region" description="Polar residues" evidence="4">
    <location>
        <begin position="30"/>
        <end position="47"/>
    </location>
</feature>
<feature type="compositionally biased region" description="Low complexity" evidence="4">
    <location>
        <begin position="200"/>
        <end position="214"/>
    </location>
</feature>
<protein>
    <recommendedName>
        <fullName>Homeobox protein DLL-4</fullName>
        <shortName>XDLL-4</shortName>
    </recommendedName>
</protein>
<gene>
    <name type="primary">dll4</name>
</gene>
<evidence type="ECO:0000250" key="1">
    <source>
        <dbReference type="UniProtKB" id="Q9JI71"/>
    </source>
</evidence>
<evidence type="ECO:0000250" key="2">
    <source>
        <dbReference type="UniProtKB" id="Q9NR61"/>
    </source>
</evidence>
<evidence type="ECO:0000255" key="3">
    <source>
        <dbReference type="PROSITE-ProRule" id="PRU00108"/>
    </source>
</evidence>
<evidence type="ECO:0000256" key="4">
    <source>
        <dbReference type="SAM" id="MobiDB-lite"/>
    </source>
</evidence>
<evidence type="ECO:0000305" key="5"/>
<name>DLL4_XENLA</name>